<keyword id="KW-0963">Cytoplasm</keyword>
<keyword id="KW-0342">GTP-binding</keyword>
<keyword id="KW-0378">Hydrolase</keyword>
<keyword id="KW-0479">Metal-binding</keyword>
<keyword id="KW-0547">Nucleotide-binding</keyword>
<keyword id="KW-1185">Reference proteome</keyword>
<keyword id="KW-0690">Ribosome biogenesis</keyword>
<keyword id="KW-0694">RNA-binding</keyword>
<keyword id="KW-0699">rRNA-binding</keyword>
<keyword id="KW-0862">Zinc</keyword>
<comment type="function">
    <text evidence="1">One of several proteins that assist in the late maturation steps of the functional core of the 30S ribosomal subunit. Helps release RbfA from mature subunits. May play a role in the assembly of ribosomal proteins into the subunit. Circularly permuted GTPase that catalyzes slow GTP hydrolysis, GTPase activity is stimulated by the 30S ribosomal subunit.</text>
</comment>
<comment type="cofactor">
    <cofactor evidence="1">
        <name>Zn(2+)</name>
        <dbReference type="ChEBI" id="CHEBI:29105"/>
    </cofactor>
    <text evidence="1">Binds 1 zinc ion per subunit.</text>
</comment>
<comment type="subunit">
    <text evidence="1">Monomer. Associates with 30S ribosomal subunit, binds 16S rRNA.</text>
</comment>
<comment type="subcellular location">
    <subcellularLocation>
        <location evidence="1">Cytoplasm</location>
    </subcellularLocation>
</comment>
<comment type="similarity">
    <text evidence="1">Belongs to the TRAFAC class YlqF/YawG GTPase family. RsgA subfamily.</text>
</comment>
<name>RSGA_GEOKA</name>
<gene>
    <name evidence="1" type="primary">rsgA</name>
    <name type="ordered locus">GK1177</name>
</gene>
<accession>Q5L0R8</accession>
<sequence length="293" mass="32761">MAEGQIIKALSGFYYVLSEGRVFQCRGRGVFRKKKVTPLVGDRVVFQATSETEGYILEIGERQNELVRPPIANVEQAILVFSAVSPDFSAKLLDRFLVLVESKRITPIIVISKIDLLDGESKEEIARYVHDYRRIGYDVIETSAVTKGGLDELALRLRGRVSVVAGQSGVGKSSLLNALRPDLRLKTGDISTHLGRGKHTTRHVELLEVAGGLVADTPGFSALEFNQIELDELPHYFPEFRTYGEGCKFRGCLHIAEPKCAVREAVEAGEIPSYRYDHYVSFVAEMKERKPRY</sequence>
<evidence type="ECO:0000255" key="1">
    <source>
        <dbReference type="HAMAP-Rule" id="MF_01820"/>
    </source>
</evidence>
<evidence type="ECO:0000255" key="2">
    <source>
        <dbReference type="PROSITE-ProRule" id="PRU01058"/>
    </source>
</evidence>
<organism>
    <name type="scientific">Geobacillus kaustophilus (strain HTA426)</name>
    <dbReference type="NCBI Taxonomy" id="235909"/>
    <lineage>
        <taxon>Bacteria</taxon>
        <taxon>Bacillati</taxon>
        <taxon>Bacillota</taxon>
        <taxon>Bacilli</taxon>
        <taxon>Bacillales</taxon>
        <taxon>Anoxybacillaceae</taxon>
        <taxon>Geobacillus</taxon>
        <taxon>Geobacillus thermoleovorans group</taxon>
    </lineage>
</organism>
<feature type="chain" id="PRO_1000188079" description="Small ribosomal subunit biogenesis GTPase RsgA">
    <location>
        <begin position="1"/>
        <end position="293"/>
    </location>
</feature>
<feature type="domain" description="CP-type G" evidence="2">
    <location>
        <begin position="63"/>
        <end position="223"/>
    </location>
</feature>
<feature type="binding site" evidence="1">
    <location>
        <begin position="112"/>
        <end position="115"/>
    </location>
    <ligand>
        <name>GTP</name>
        <dbReference type="ChEBI" id="CHEBI:37565"/>
    </ligand>
</feature>
<feature type="binding site" evidence="1">
    <location>
        <begin position="166"/>
        <end position="174"/>
    </location>
    <ligand>
        <name>GTP</name>
        <dbReference type="ChEBI" id="CHEBI:37565"/>
    </ligand>
</feature>
<feature type="binding site" evidence="1">
    <location>
        <position position="247"/>
    </location>
    <ligand>
        <name>Zn(2+)</name>
        <dbReference type="ChEBI" id="CHEBI:29105"/>
    </ligand>
</feature>
<feature type="binding site" evidence="1">
    <location>
        <position position="252"/>
    </location>
    <ligand>
        <name>Zn(2+)</name>
        <dbReference type="ChEBI" id="CHEBI:29105"/>
    </ligand>
</feature>
<feature type="binding site" evidence="1">
    <location>
        <position position="254"/>
    </location>
    <ligand>
        <name>Zn(2+)</name>
        <dbReference type="ChEBI" id="CHEBI:29105"/>
    </ligand>
</feature>
<feature type="binding site" evidence="1">
    <location>
        <position position="260"/>
    </location>
    <ligand>
        <name>Zn(2+)</name>
        <dbReference type="ChEBI" id="CHEBI:29105"/>
    </ligand>
</feature>
<dbReference type="EC" id="3.6.1.-" evidence="1"/>
<dbReference type="EMBL" id="BA000043">
    <property type="protein sequence ID" value="BAD75462.1"/>
    <property type="molecule type" value="Genomic_DNA"/>
</dbReference>
<dbReference type="RefSeq" id="WP_011230677.1">
    <property type="nucleotide sequence ID" value="NC_006510.1"/>
</dbReference>
<dbReference type="SMR" id="Q5L0R8"/>
<dbReference type="STRING" id="235909.GK1177"/>
<dbReference type="KEGG" id="gka:GK1177"/>
<dbReference type="PATRIC" id="fig|235909.7.peg.1277"/>
<dbReference type="eggNOG" id="COG1162">
    <property type="taxonomic scope" value="Bacteria"/>
</dbReference>
<dbReference type="HOGENOM" id="CLU_033617_2_1_9"/>
<dbReference type="Proteomes" id="UP000001172">
    <property type="component" value="Chromosome"/>
</dbReference>
<dbReference type="GO" id="GO:0005737">
    <property type="term" value="C:cytoplasm"/>
    <property type="evidence" value="ECO:0007669"/>
    <property type="project" value="UniProtKB-SubCell"/>
</dbReference>
<dbReference type="GO" id="GO:0005525">
    <property type="term" value="F:GTP binding"/>
    <property type="evidence" value="ECO:0007669"/>
    <property type="project" value="UniProtKB-UniRule"/>
</dbReference>
<dbReference type="GO" id="GO:0003924">
    <property type="term" value="F:GTPase activity"/>
    <property type="evidence" value="ECO:0007669"/>
    <property type="project" value="UniProtKB-UniRule"/>
</dbReference>
<dbReference type="GO" id="GO:0046872">
    <property type="term" value="F:metal ion binding"/>
    <property type="evidence" value="ECO:0007669"/>
    <property type="project" value="UniProtKB-KW"/>
</dbReference>
<dbReference type="GO" id="GO:0019843">
    <property type="term" value="F:rRNA binding"/>
    <property type="evidence" value="ECO:0007669"/>
    <property type="project" value="UniProtKB-KW"/>
</dbReference>
<dbReference type="GO" id="GO:0042274">
    <property type="term" value="P:ribosomal small subunit biogenesis"/>
    <property type="evidence" value="ECO:0007669"/>
    <property type="project" value="UniProtKB-UniRule"/>
</dbReference>
<dbReference type="CDD" id="cd04466">
    <property type="entry name" value="S1_YloQ_GTPase"/>
    <property type="match status" value="1"/>
</dbReference>
<dbReference type="CDD" id="cd01854">
    <property type="entry name" value="YjeQ_EngC"/>
    <property type="match status" value="1"/>
</dbReference>
<dbReference type="Gene3D" id="2.40.50.140">
    <property type="entry name" value="Nucleic acid-binding proteins"/>
    <property type="match status" value="1"/>
</dbReference>
<dbReference type="Gene3D" id="3.40.50.300">
    <property type="entry name" value="P-loop containing nucleotide triphosphate hydrolases"/>
    <property type="match status" value="1"/>
</dbReference>
<dbReference type="Gene3D" id="1.10.40.50">
    <property type="entry name" value="Probable gtpase engc, domain 3"/>
    <property type="match status" value="1"/>
</dbReference>
<dbReference type="HAMAP" id="MF_01820">
    <property type="entry name" value="GTPase_RsgA"/>
    <property type="match status" value="1"/>
</dbReference>
<dbReference type="InterPro" id="IPR030378">
    <property type="entry name" value="G_CP_dom"/>
</dbReference>
<dbReference type="InterPro" id="IPR012340">
    <property type="entry name" value="NA-bd_OB-fold"/>
</dbReference>
<dbReference type="InterPro" id="IPR027417">
    <property type="entry name" value="P-loop_NTPase"/>
</dbReference>
<dbReference type="InterPro" id="IPR004881">
    <property type="entry name" value="Ribosome_biogen_GTPase_RsgA"/>
</dbReference>
<dbReference type="InterPro" id="IPR010914">
    <property type="entry name" value="RsgA_GTPase_dom"/>
</dbReference>
<dbReference type="InterPro" id="IPR031944">
    <property type="entry name" value="RsgA_N"/>
</dbReference>
<dbReference type="NCBIfam" id="TIGR00157">
    <property type="entry name" value="ribosome small subunit-dependent GTPase A"/>
    <property type="match status" value="1"/>
</dbReference>
<dbReference type="PANTHER" id="PTHR32120">
    <property type="entry name" value="SMALL RIBOSOMAL SUBUNIT BIOGENESIS GTPASE RSGA"/>
    <property type="match status" value="1"/>
</dbReference>
<dbReference type="PANTHER" id="PTHR32120:SF11">
    <property type="entry name" value="SMALL RIBOSOMAL SUBUNIT BIOGENESIS GTPASE RSGA 1, MITOCHONDRIAL-RELATED"/>
    <property type="match status" value="1"/>
</dbReference>
<dbReference type="Pfam" id="PF03193">
    <property type="entry name" value="RsgA_GTPase"/>
    <property type="match status" value="1"/>
</dbReference>
<dbReference type="Pfam" id="PF16745">
    <property type="entry name" value="RsgA_N"/>
    <property type="match status" value="1"/>
</dbReference>
<dbReference type="SUPFAM" id="SSF50249">
    <property type="entry name" value="Nucleic acid-binding proteins"/>
    <property type="match status" value="1"/>
</dbReference>
<dbReference type="SUPFAM" id="SSF52540">
    <property type="entry name" value="P-loop containing nucleoside triphosphate hydrolases"/>
    <property type="match status" value="1"/>
</dbReference>
<dbReference type="PROSITE" id="PS50936">
    <property type="entry name" value="ENGC_GTPASE"/>
    <property type="match status" value="1"/>
</dbReference>
<dbReference type="PROSITE" id="PS51721">
    <property type="entry name" value="G_CP"/>
    <property type="match status" value="1"/>
</dbReference>
<proteinExistence type="inferred from homology"/>
<protein>
    <recommendedName>
        <fullName evidence="1">Small ribosomal subunit biogenesis GTPase RsgA</fullName>
        <ecNumber evidence="1">3.6.1.-</ecNumber>
    </recommendedName>
</protein>
<reference key="1">
    <citation type="journal article" date="2004" name="Nucleic Acids Res.">
        <title>Thermoadaptation trait revealed by the genome sequence of thermophilic Geobacillus kaustophilus.</title>
        <authorList>
            <person name="Takami H."/>
            <person name="Takaki Y."/>
            <person name="Chee G.-J."/>
            <person name="Nishi S."/>
            <person name="Shimamura S."/>
            <person name="Suzuki H."/>
            <person name="Matsui S."/>
            <person name="Uchiyama I."/>
        </authorList>
    </citation>
    <scope>NUCLEOTIDE SEQUENCE [LARGE SCALE GENOMIC DNA]</scope>
    <source>
        <strain>HTA426</strain>
    </source>
</reference>